<dbReference type="EC" id="1.2.1.n2"/>
<dbReference type="EMBL" id="U77680">
    <property type="protein sequence ID" value="AAC45217.1"/>
    <property type="molecule type" value="Genomic_DNA"/>
</dbReference>
<dbReference type="EMBL" id="CR543861">
    <property type="protein sequence ID" value="CAG70047.1"/>
    <property type="status" value="ALT_INIT"/>
    <property type="molecule type" value="Genomic_DNA"/>
</dbReference>
<dbReference type="RefSeq" id="WP_004923651.1">
    <property type="nucleotide sequence ID" value="NC_005966.1"/>
</dbReference>
<dbReference type="SMR" id="Q6F7B8"/>
<dbReference type="STRING" id="202950.GCA_001485005_02221"/>
<dbReference type="GeneID" id="45235577"/>
<dbReference type="KEGG" id="aci:ACIAD3383"/>
<dbReference type="eggNOG" id="COG4221">
    <property type="taxonomic scope" value="Bacteria"/>
</dbReference>
<dbReference type="HOGENOM" id="CLU_010194_2_1_6"/>
<dbReference type="OrthoDB" id="9810734at2"/>
<dbReference type="BioCyc" id="ASP62977:ACIAD_RS15310-MONOMER"/>
<dbReference type="Proteomes" id="UP000000430">
    <property type="component" value="Chromosome"/>
</dbReference>
<dbReference type="GO" id="GO:0016020">
    <property type="term" value="C:membrane"/>
    <property type="evidence" value="ECO:0007669"/>
    <property type="project" value="TreeGrafter"/>
</dbReference>
<dbReference type="GO" id="GO:0016491">
    <property type="term" value="F:oxidoreductase activity"/>
    <property type="evidence" value="ECO:0007669"/>
    <property type="project" value="UniProtKB-KW"/>
</dbReference>
<dbReference type="GO" id="GO:0006629">
    <property type="term" value="P:lipid metabolic process"/>
    <property type="evidence" value="ECO:0007669"/>
    <property type="project" value="UniProtKB-KW"/>
</dbReference>
<dbReference type="CDD" id="cd05233">
    <property type="entry name" value="SDR_c"/>
    <property type="match status" value="1"/>
</dbReference>
<dbReference type="Gene3D" id="3.40.50.720">
    <property type="entry name" value="NAD(P)-binding Rossmann-like Domain"/>
    <property type="match status" value="1"/>
</dbReference>
<dbReference type="InterPro" id="IPR036291">
    <property type="entry name" value="NAD(P)-bd_dom_sf"/>
</dbReference>
<dbReference type="InterPro" id="IPR020904">
    <property type="entry name" value="Sc_DH/Rdtase_CS"/>
</dbReference>
<dbReference type="InterPro" id="IPR002347">
    <property type="entry name" value="SDR_fam"/>
</dbReference>
<dbReference type="PANTHER" id="PTHR44196">
    <property type="entry name" value="DEHYDROGENASE/REDUCTASE SDR FAMILY MEMBER 7B"/>
    <property type="match status" value="1"/>
</dbReference>
<dbReference type="PANTHER" id="PTHR44196:SF1">
    <property type="entry name" value="DEHYDROGENASE_REDUCTASE SDR FAMILY MEMBER 7B"/>
    <property type="match status" value="1"/>
</dbReference>
<dbReference type="Pfam" id="PF00106">
    <property type="entry name" value="adh_short"/>
    <property type="match status" value="1"/>
</dbReference>
<dbReference type="PRINTS" id="PR00081">
    <property type="entry name" value="GDHRDH"/>
</dbReference>
<dbReference type="PRINTS" id="PR00080">
    <property type="entry name" value="SDRFAMILY"/>
</dbReference>
<dbReference type="SMART" id="SM00822">
    <property type="entry name" value="PKS_KR"/>
    <property type="match status" value="1"/>
</dbReference>
<dbReference type="SUPFAM" id="SSF51735">
    <property type="entry name" value="NAD(P)-binding Rossmann-fold domains"/>
    <property type="match status" value="1"/>
</dbReference>
<dbReference type="PROSITE" id="PS00061">
    <property type="entry name" value="ADH_SHORT"/>
    <property type="match status" value="1"/>
</dbReference>
<protein>
    <recommendedName>
        <fullName>Fatty acyl-CoA reductase</fullName>
        <ecNumber>1.2.1.n2</ecNumber>
    </recommendedName>
</protein>
<reference key="1">
    <citation type="journal article" date="1997" name="J. Bacteriol.">
        <title>Isolation of mutants of Acinetobacter calcoaceticus deficient in wax ester synthesis and complementation of one mutation with a gene encoding a fatty acyl coenzyme A reductase.</title>
        <authorList>
            <person name="Reiser S."/>
            <person name="Somerville C."/>
        </authorList>
    </citation>
    <scope>NUCLEOTIDE SEQUENCE [GENOMIC DNA]</scope>
    <scope>FUNCTION</scope>
    <scope>CATALYTIC ACTIVITY</scope>
    <scope>SUBSTRATE SPECIFICITY</scope>
    <source>
        <strain>ATCC 33305 / BD413 / ADP1</strain>
    </source>
</reference>
<reference key="2">
    <citation type="journal article" date="2004" name="Nucleic Acids Res.">
        <title>Unique features revealed by the genome sequence of Acinetobacter sp. ADP1, a versatile and naturally transformation competent bacterium.</title>
        <authorList>
            <person name="Barbe V."/>
            <person name="Vallenet D."/>
            <person name="Fonknechten N."/>
            <person name="Kreimeyer A."/>
            <person name="Oztas S."/>
            <person name="Labarre L."/>
            <person name="Cruveiller S."/>
            <person name="Robert C."/>
            <person name="Duprat S."/>
            <person name="Wincker P."/>
            <person name="Ornston L.N."/>
            <person name="Weissenbach J."/>
            <person name="Marliere P."/>
            <person name="Cohen G.N."/>
            <person name="Medigue C."/>
        </authorList>
    </citation>
    <scope>NUCLEOTIDE SEQUENCE [LARGE SCALE GENOMIC DNA]</scope>
    <source>
        <strain>ATCC 33305 / BD413 / ADP1</strain>
    </source>
</reference>
<name>ACR1_ACIAD</name>
<organism>
    <name type="scientific">Acinetobacter baylyi (strain ATCC 33305 / BD413 / ADP1)</name>
    <dbReference type="NCBI Taxonomy" id="62977"/>
    <lineage>
        <taxon>Bacteria</taxon>
        <taxon>Pseudomonadati</taxon>
        <taxon>Pseudomonadota</taxon>
        <taxon>Gammaproteobacteria</taxon>
        <taxon>Moraxellales</taxon>
        <taxon>Moraxellaceae</taxon>
        <taxon>Acinetobacter</taxon>
    </lineage>
</organism>
<gene>
    <name type="primary">acr1</name>
    <name type="ordered locus">ACIAD3383</name>
</gene>
<evidence type="ECO:0000250" key="1"/>
<evidence type="ECO:0000255" key="2">
    <source>
        <dbReference type="PROSITE-ProRule" id="PRU10001"/>
    </source>
</evidence>
<evidence type="ECO:0000269" key="3">
    <source>
    </source>
</evidence>
<evidence type="ECO:0000305" key="4"/>
<proteinExistence type="evidence at protein level"/>
<comment type="function">
    <text evidence="3">Catalyzes the NADPH-dependent reduction of long chain acyl-CoA (with chain lengths of 14 to 22 carbons) to the corresponding aldehyde.</text>
</comment>
<comment type="catalytic activity">
    <reaction evidence="3">
        <text>hexadecanal + NADP(+) + CoA = hexadecanoyl-CoA + NADPH + H(+)</text>
        <dbReference type="Rhea" id="RHEA:27270"/>
        <dbReference type="ChEBI" id="CHEBI:15378"/>
        <dbReference type="ChEBI" id="CHEBI:17600"/>
        <dbReference type="ChEBI" id="CHEBI:57287"/>
        <dbReference type="ChEBI" id="CHEBI:57379"/>
        <dbReference type="ChEBI" id="CHEBI:57783"/>
        <dbReference type="ChEBI" id="CHEBI:58349"/>
        <dbReference type="EC" id="1.2.1.n2"/>
    </reaction>
</comment>
<comment type="similarity">
    <text evidence="4">Belongs to the short-chain dehydrogenases/reductases (SDR) family.</text>
</comment>
<comment type="sequence caution" evidence="4">
    <conflict type="erroneous initiation">
        <sequence resource="EMBL-CDS" id="CAG70047"/>
    </conflict>
    <text>Extended N-terminus.</text>
</comment>
<feature type="chain" id="PRO_0000382695" description="Fatty acyl-CoA reductase">
    <location>
        <begin position="1"/>
        <end position="295"/>
    </location>
</feature>
<feature type="active site" description="Proton acceptor" evidence="2">
    <location>
        <position position="166"/>
    </location>
</feature>
<feature type="binding site" evidence="1">
    <location>
        <begin position="21"/>
        <end position="28"/>
    </location>
    <ligand>
        <name>NADP(+)</name>
        <dbReference type="ChEBI" id="CHEBI:58349"/>
    </ligand>
</feature>
<feature type="binding site" evidence="1">
    <location>
        <position position="153"/>
    </location>
    <ligand>
        <name>substrate</name>
    </ligand>
</feature>
<feature type="sequence conflict" description="In Ref. 1; AAC45217." evidence="4" ref="1">
    <original>K</original>
    <variation>T</variation>
    <location>
        <position position="234"/>
    </location>
</feature>
<keyword id="KW-0443">Lipid metabolism</keyword>
<keyword id="KW-0521">NADP</keyword>
<keyword id="KW-0560">Oxidoreductase</keyword>
<accession>Q6F7B8</accession>
<accession>P94129</accession>
<sequence>MNKKLEALFRENVKGKVALITGASSGIGLTIAKRIAAAGAHVLLVARTQETLEEVKAAIEQQGGQASIFPCDLTDMNAIDQLSQQIMASVDHVDFLINNAGRSIRRAVHESFDRFHDFERTMQLNYFGAVRLVLNLLPHMIKRKNGQIINISSIGVLANATRFSAYVASKAALDAFSRCLSAEVLKHKISITSIYMPLVRTPMIAPTKIYKYVPTLSPEEAADLIVYAIVKRPKRIATHLGRLASITYAIAPDINNILMSIGFNLFPSSTAALGEQEKLNLLQRAYARLFPGEHW</sequence>